<organism>
    <name type="scientific">Xanthomonas axonopodis pv. citri (strain 306)</name>
    <dbReference type="NCBI Taxonomy" id="190486"/>
    <lineage>
        <taxon>Bacteria</taxon>
        <taxon>Pseudomonadati</taxon>
        <taxon>Pseudomonadota</taxon>
        <taxon>Gammaproteobacteria</taxon>
        <taxon>Lysobacterales</taxon>
        <taxon>Lysobacteraceae</taxon>
        <taxon>Xanthomonas</taxon>
    </lineage>
</organism>
<proteinExistence type="inferred from homology"/>
<dbReference type="EC" id="2.3.3.13" evidence="1"/>
<dbReference type="EMBL" id="AE008923">
    <property type="protein sequence ID" value="AAM38298.1"/>
    <property type="molecule type" value="Genomic_DNA"/>
</dbReference>
<dbReference type="RefSeq" id="WP_005912016.1">
    <property type="nucleotide sequence ID" value="NC_003919.1"/>
</dbReference>
<dbReference type="SMR" id="P58900"/>
<dbReference type="KEGG" id="xac:XAC3455"/>
<dbReference type="eggNOG" id="COG0119">
    <property type="taxonomic scope" value="Bacteria"/>
</dbReference>
<dbReference type="HOGENOM" id="CLU_022158_0_1_6"/>
<dbReference type="UniPathway" id="UPA00048">
    <property type="reaction ID" value="UER00070"/>
</dbReference>
<dbReference type="Proteomes" id="UP000000576">
    <property type="component" value="Chromosome"/>
</dbReference>
<dbReference type="GO" id="GO:0005829">
    <property type="term" value="C:cytosol"/>
    <property type="evidence" value="ECO:0007669"/>
    <property type="project" value="TreeGrafter"/>
</dbReference>
<dbReference type="GO" id="GO:0003852">
    <property type="term" value="F:2-isopropylmalate synthase activity"/>
    <property type="evidence" value="ECO:0007669"/>
    <property type="project" value="UniProtKB-UniRule"/>
</dbReference>
<dbReference type="GO" id="GO:0003985">
    <property type="term" value="F:acetyl-CoA C-acetyltransferase activity"/>
    <property type="evidence" value="ECO:0007669"/>
    <property type="project" value="UniProtKB-UniRule"/>
</dbReference>
<dbReference type="GO" id="GO:0030145">
    <property type="term" value="F:manganese ion binding"/>
    <property type="evidence" value="ECO:0007669"/>
    <property type="project" value="UniProtKB-UniRule"/>
</dbReference>
<dbReference type="GO" id="GO:0009098">
    <property type="term" value="P:L-leucine biosynthetic process"/>
    <property type="evidence" value="ECO:0007669"/>
    <property type="project" value="UniProtKB-UniRule"/>
</dbReference>
<dbReference type="CDD" id="cd07940">
    <property type="entry name" value="DRE_TIM_IPMS"/>
    <property type="match status" value="1"/>
</dbReference>
<dbReference type="FunFam" id="1.10.238.260:FF:000001">
    <property type="entry name" value="2-isopropylmalate synthase"/>
    <property type="match status" value="1"/>
</dbReference>
<dbReference type="FunFam" id="3.20.20.70:FF:000010">
    <property type="entry name" value="2-isopropylmalate synthase"/>
    <property type="match status" value="1"/>
</dbReference>
<dbReference type="FunFam" id="3.30.160.270:FF:000003">
    <property type="entry name" value="2-isopropylmalate synthase"/>
    <property type="match status" value="1"/>
</dbReference>
<dbReference type="Gene3D" id="1.10.238.260">
    <property type="match status" value="1"/>
</dbReference>
<dbReference type="Gene3D" id="3.30.160.270">
    <property type="match status" value="1"/>
</dbReference>
<dbReference type="Gene3D" id="3.20.20.70">
    <property type="entry name" value="Aldolase class I"/>
    <property type="match status" value="1"/>
</dbReference>
<dbReference type="HAMAP" id="MF_01025">
    <property type="entry name" value="LeuA_type1"/>
    <property type="match status" value="1"/>
</dbReference>
<dbReference type="InterPro" id="IPR050073">
    <property type="entry name" value="2-IPM_HCS-like"/>
</dbReference>
<dbReference type="InterPro" id="IPR013709">
    <property type="entry name" value="2-isopropylmalate_synth_dimer"/>
</dbReference>
<dbReference type="InterPro" id="IPR002034">
    <property type="entry name" value="AIPM/Hcit_synth_CS"/>
</dbReference>
<dbReference type="InterPro" id="IPR013785">
    <property type="entry name" value="Aldolase_TIM"/>
</dbReference>
<dbReference type="InterPro" id="IPR054691">
    <property type="entry name" value="LeuA/HCS_post-cat"/>
</dbReference>
<dbReference type="InterPro" id="IPR036230">
    <property type="entry name" value="LeuA_allosteric_dom_sf"/>
</dbReference>
<dbReference type="InterPro" id="IPR005671">
    <property type="entry name" value="LeuA_bact_synth"/>
</dbReference>
<dbReference type="InterPro" id="IPR000891">
    <property type="entry name" value="PYR_CT"/>
</dbReference>
<dbReference type="NCBIfam" id="TIGR00973">
    <property type="entry name" value="leuA_bact"/>
    <property type="match status" value="1"/>
</dbReference>
<dbReference type="NCBIfam" id="NF002086">
    <property type="entry name" value="PRK00915.1-3"/>
    <property type="match status" value="1"/>
</dbReference>
<dbReference type="PANTHER" id="PTHR10277:SF9">
    <property type="entry name" value="2-ISOPROPYLMALATE SYNTHASE 1, CHLOROPLASTIC-RELATED"/>
    <property type="match status" value="1"/>
</dbReference>
<dbReference type="PANTHER" id="PTHR10277">
    <property type="entry name" value="HOMOCITRATE SYNTHASE-RELATED"/>
    <property type="match status" value="1"/>
</dbReference>
<dbReference type="Pfam" id="PF22617">
    <property type="entry name" value="HCS_D2"/>
    <property type="match status" value="1"/>
</dbReference>
<dbReference type="Pfam" id="PF00682">
    <property type="entry name" value="HMGL-like"/>
    <property type="match status" value="1"/>
</dbReference>
<dbReference type="Pfam" id="PF08502">
    <property type="entry name" value="LeuA_dimer"/>
    <property type="match status" value="1"/>
</dbReference>
<dbReference type="SMART" id="SM00917">
    <property type="entry name" value="LeuA_dimer"/>
    <property type="match status" value="1"/>
</dbReference>
<dbReference type="SUPFAM" id="SSF110921">
    <property type="entry name" value="2-isopropylmalate synthase LeuA, allosteric (dimerisation) domain"/>
    <property type="match status" value="1"/>
</dbReference>
<dbReference type="SUPFAM" id="SSF51569">
    <property type="entry name" value="Aldolase"/>
    <property type="match status" value="1"/>
</dbReference>
<dbReference type="PROSITE" id="PS00815">
    <property type="entry name" value="AIPM_HOMOCIT_SYNTH_1"/>
    <property type="match status" value="1"/>
</dbReference>
<dbReference type="PROSITE" id="PS00816">
    <property type="entry name" value="AIPM_HOMOCIT_SYNTH_2"/>
    <property type="match status" value="1"/>
</dbReference>
<dbReference type="PROSITE" id="PS50991">
    <property type="entry name" value="PYR_CT"/>
    <property type="match status" value="1"/>
</dbReference>
<name>LEU1_XANAC</name>
<gene>
    <name evidence="1" type="primary">leuA</name>
    <name type="ordered locus">XAC3455</name>
</gene>
<sequence length="520" mass="56289">MNTTVSNQTPRIRIFDTTLRDGEQSPGCSMTPQQKLVMARALDELGVDIIETGFPASSHSDREAVAMMGRELRRPTLAVLSRCLQADIETSAKALETAANPRLHVFLSTSPLHREHKLRMSREQVLESVHRHVTLARGYVDDVEFSAEDATRTEEDFLAEVTRVAIAAGATTINLPDTVGFTTPEEIRGMFSRLIASVEGADKVIFSAHCHNDLGLAVANSLAAIEGGARQVECTINGIGERAGNCALEEITMALKVRGAFYNIDSAINTPRIVSTSQLLQRLVGMPVQRNKAVVGGNAFAHESGIHQHGMLRHRGTYEIMRPEDVGWESSQMVLGRHSGRAAVEQRLRALGYLLEEEEVKLVFEQFKALCEKQRVVTDADLQALMQDATVQEGYRLASMTISDVGSRANALVELSDPEGNRVAETAQGNGPVDALFGALASATGVKLELDSYQVHSVGIGADARGEASLSVRHDGVEYEGTGTSKDIIEASALAWLDVANRLLRQRERGVVAGKTAAVA</sequence>
<feature type="chain" id="PRO_0000140400" description="2-isopropylmalate synthase">
    <location>
        <begin position="1"/>
        <end position="520"/>
    </location>
</feature>
<feature type="domain" description="Pyruvate carboxyltransferase" evidence="1">
    <location>
        <begin position="12"/>
        <end position="274"/>
    </location>
</feature>
<feature type="region of interest" description="Regulatory domain" evidence="1">
    <location>
        <begin position="396"/>
        <end position="520"/>
    </location>
</feature>
<feature type="binding site" evidence="1">
    <location>
        <position position="21"/>
    </location>
    <ligand>
        <name>Mn(2+)</name>
        <dbReference type="ChEBI" id="CHEBI:29035"/>
    </ligand>
</feature>
<feature type="binding site" evidence="1">
    <location>
        <position position="209"/>
    </location>
    <ligand>
        <name>Mn(2+)</name>
        <dbReference type="ChEBI" id="CHEBI:29035"/>
    </ligand>
</feature>
<feature type="binding site" evidence="1">
    <location>
        <position position="211"/>
    </location>
    <ligand>
        <name>Mn(2+)</name>
        <dbReference type="ChEBI" id="CHEBI:29035"/>
    </ligand>
</feature>
<feature type="binding site" evidence="1">
    <location>
        <position position="245"/>
    </location>
    <ligand>
        <name>Mn(2+)</name>
        <dbReference type="ChEBI" id="CHEBI:29035"/>
    </ligand>
</feature>
<keyword id="KW-0028">Amino-acid biosynthesis</keyword>
<keyword id="KW-0100">Branched-chain amino acid biosynthesis</keyword>
<keyword id="KW-0963">Cytoplasm</keyword>
<keyword id="KW-0432">Leucine biosynthesis</keyword>
<keyword id="KW-0464">Manganese</keyword>
<keyword id="KW-0479">Metal-binding</keyword>
<keyword id="KW-0808">Transferase</keyword>
<reference key="1">
    <citation type="journal article" date="2002" name="Nature">
        <title>Comparison of the genomes of two Xanthomonas pathogens with differing host specificities.</title>
        <authorList>
            <person name="da Silva A.C.R."/>
            <person name="Ferro J.A."/>
            <person name="Reinach F.C."/>
            <person name="Farah C.S."/>
            <person name="Furlan L.R."/>
            <person name="Quaggio R.B."/>
            <person name="Monteiro-Vitorello C.B."/>
            <person name="Van Sluys M.A."/>
            <person name="Almeida N.F. Jr."/>
            <person name="Alves L.M.C."/>
            <person name="do Amaral A.M."/>
            <person name="Bertolini M.C."/>
            <person name="Camargo L.E.A."/>
            <person name="Camarotte G."/>
            <person name="Cannavan F."/>
            <person name="Cardozo J."/>
            <person name="Chambergo F."/>
            <person name="Ciapina L.P."/>
            <person name="Cicarelli R.M.B."/>
            <person name="Coutinho L.L."/>
            <person name="Cursino-Santos J.R."/>
            <person name="El-Dorry H."/>
            <person name="Faria J.B."/>
            <person name="Ferreira A.J.S."/>
            <person name="Ferreira R.C.C."/>
            <person name="Ferro M.I.T."/>
            <person name="Formighieri E.F."/>
            <person name="Franco M.C."/>
            <person name="Greggio C.C."/>
            <person name="Gruber A."/>
            <person name="Katsuyama A.M."/>
            <person name="Kishi L.T."/>
            <person name="Leite R.P."/>
            <person name="Lemos E.G.M."/>
            <person name="Lemos M.V.F."/>
            <person name="Locali E.C."/>
            <person name="Machado M.A."/>
            <person name="Madeira A.M.B.N."/>
            <person name="Martinez-Rossi N.M."/>
            <person name="Martins E.C."/>
            <person name="Meidanis J."/>
            <person name="Menck C.F.M."/>
            <person name="Miyaki C.Y."/>
            <person name="Moon D.H."/>
            <person name="Moreira L.M."/>
            <person name="Novo M.T.M."/>
            <person name="Okura V.K."/>
            <person name="Oliveira M.C."/>
            <person name="Oliveira V.R."/>
            <person name="Pereira H.A."/>
            <person name="Rossi A."/>
            <person name="Sena J.A.D."/>
            <person name="Silva C."/>
            <person name="de Souza R.F."/>
            <person name="Spinola L.A.F."/>
            <person name="Takita M.A."/>
            <person name="Tamura R.E."/>
            <person name="Teixeira E.C."/>
            <person name="Tezza R.I.D."/>
            <person name="Trindade dos Santos M."/>
            <person name="Truffi D."/>
            <person name="Tsai S.M."/>
            <person name="White F.F."/>
            <person name="Setubal J.C."/>
            <person name="Kitajima J.P."/>
        </authorList>
    </citation>
    <scope>NUCLEOTIDE SEQUENCE [LARGE SCALE GENOMIC DNA]</scope>
    <source>
        <strain>306</strain>
    </source>
</reference>
<protein>
    <recommendedName>
        <fullName evidence="1">2-isopropylmalate synthase</fullName>
        <ecNumber evidence="1">2.3.3.13</ecNumber>
    </recommendedName>
    <alternativeName>
        <fullName evidence="1">Alpha-IPM synthase</fullName>
    </alternativeName>
    <alternativeName>
        <fullName evidence="1">Alpha-isopropylmalate synthase</fullName>
    </alternativeName>
</protein>
<accession>P58900</accession>
<evidence type="ECO:0000255" key="1">
    <source>
        <dbReference type="HAMAP-Rule" id="MF_01025"/>
    </source>
</evidence>
<comment type="function">
    <text evidence="1">Catalyzes the condensation of the acetyl group of acetyl-CoA with 3-methyl-2-oxobutanoate (2-ketoisovalerate) to form 3-carboxy-3-hydroxy-4-methylpentanoate (2-isopropylmalate).</text>
</comment>
<comment type="catalytic activity">
    <reaction evidence="1">
        <text>3-methyl-2-oxobutanoate + acetyl-CoA + H2O = (2S)-2-isopropylmalate + CoA + H(+)</text>
        <dbReference type="Rhea" id="RHEA:21524"/>
        <dbReference type="ChEBI" id="CHEBI:1178"/>
        <dbReference type="ChEBI" id="CHEBI:11851"/>
        <dbReference type="ChEBI" id="CHEBI:15377"/>
        <dbReference type="ChEBI" id="CHEBI:15378"/>
        <dbReference type="ChEBI" id="CHEBI:57287"/>
        <dbReference type="ChEBI" id="CHEBI:57288"/>
        <dbReference type="EC" id="2.3.3.13"/>
    </reaction>
</comment>
<comment type="cofactor">
    <cofactor evidence="1">
        <name>Mn(2+)</name>
        <dbReference type="ChEBI" id="CHEBI:29035"/>
    </cofactor>
</comment>
<comment type="pathway">
    <text evidence="1">Amino-acid biosynthesis; L-leucine biosynthesis; L-leucine from 3-methyl-2-oxobutanoate: step 1/4.</text>
</comment>
<comment type="subunit">
    <text evidence="1">Homodimer.</text>
</comment>
<comment type="subcellular location">
    <subcellularLocation>
        <location evidence="1">Cytoplasm</location>
    </subcellularLocation>
</comment>
<comment type="similarity">
    <text evidence="1">Belongs to the alpha-IPM synthase/homocitrate synthase family. LeuA type 1 subfamily.</text>
</comment>